<dbReference type="EMBL" id="D90154">
    <property type="protein sequence ID" value="BAA14184.1"/>
    <property type="molecule type" value="Genomic_DNA"/>
</dbReference>
<dbReference type="PIR" id="A36351">
    <property type="entry name" value="A36351"/>
</dbReference>
<dbReference type="GO" id="GO:0005576">
    <property type="term" value="C:extracellular region"/>
    <property type="evidence" value="ECO:0007669"/>
    <property type="project" value="UniProtKB-SubCell"/>
</dbReference>
<dbReference type="GO" id="GO:0042742">
    <property type="term" value="P:defense response to bacterium"/>
    <property type="evidence" value="ECO:0007669"/>
    <property type="project" value="UniProtKB-KW"/>
</dbReference>
<dbReference type="GO" id="GO:0045087">
    <property type="term" value="P:innate immune response"/>
    <property type="evidence" value="ECO:0007669"/>
    <property type="project" value="UniProtKB-KW"/>
</dbReference>
<dbReference type="InterPro" id="IPR005521">
    <property type="entry name" value="Attacin_C"/>
</dbReference>
<dbReference type="InterPro" id="IPR005520">
    <property type="entry name" value="Attacin_N"/>
</dbReference>
<dbReference type="Pfam" id="PF03769">
    <property type="entry name" value="Attacin_C"/>
    <property type="match status" value="1"/>
</dbReference>
<dbReference type="Pfam" id="PF03768">
    <property type="entry name" value="Attacin_N"/>
    <property type="match status" value="1"/>
</dbReference>
<proteinExistence type="evidence at transcript level"/>
<protein>
    <recommendedName>
        <fullName>Sarcotoxin II-1</fullName>
    </recommendedName>
</protein>
<sequence length="265" mass="27471">MKSFVLFAACMAIIALGSLAHAYPQKLPVPIPPPSNPPVAVLQNSVATNSKGGQDVSVKLSATNLGNNHVQPIAEVFAEGNTKGGNVLRGATVGVQGHGLGASVTKTQTDTKIKGLDFQPQLSSSTLALQGDRLGASISRDVNRGVSDTFTKSVSANVFRNDNHNLDATVFRSDVRQNNGFNFQKTGGMLDYSHANGHGLNAGLTHFSGIGNQANVGGSSTLFKSNDGSLSLKANAGGSQWLSGPFSNQRDYNVGLSLTHHGCGG</sequence>
<name>SRX21_SARPE</name>
<feature type="signal peptide" evidence="1">
    <location>
        <begin position="1"/>
        <end position="22"/>
    </location>
</feature>
<feature type="propeptide" id="PRO_0000004885" description="Removed by a dipeptidylpeptidase">
    <location>
        <begin position="23"/>
        <end position="24"/>
    </location>
</feature>
<feature type="chain" id="PRO_0000004886" description="Sarcotoxin II-1">
    <location>
        <begin position="25"/>
        <end position="264"/>
    </location>
</feature>
<feature type="modified residue" description="Pyrrolidone carboxylic acid" evidence="1">
    <location>
        <position position="25"/>
    </location>
</feature>
<feature type="modified residue" description="Glycine amide" evidence="2">
    <location>
        <position position="264"/>
    </location>
</feature>
<reference key="1">
    <citation type="journal article" date="1990" name="Mol. Cell. Biol.">
        <title>Analysis of a gene cluster for sarcotoxin II, a group of antibacterial proteins of Sarcophaga peregrina.</title>
        <authorList>
            <person name="Kanai A."/>
            <person name="Natori S."/>
        </authorList>
    </citation>
    <scope>NUCLEOTIDE SEQUENCE [GENOMIC DNA]</scope>
</reference>
<organism>
    <name type="scientific">Sarcophaga peregrina</name>
    <name type="common">Flesh fly</name>
    <name type="synonym">Boettcherisca peregrina</name>
    <dbReference type="NCBI Taxonomy" id="7386"/>
    <lineage>
        <taxon>Eukaryota</taxon>
        <taxon>Metazoa</taxon>
        <taxon>Ecdysozoa</taxon>
        <taxon>Arthropoda</taxon>
        <taxon>Hexapoda</taxon>
        <taxon>Insecta</taxon>
        <taxon>Pterygota</taxon>
        <taxon>Neoptera</taxon>
        <taxon>Endopterygota</taxon>
        <taxon>Diptera</taxon>
        <taxon>Brachycera</taxon>
        <taxon>Muscomorpha</taxon>
        <taxon>Oestroidea</taxon>
        <taxon>Sarcophagidae</taxon>
        <taxon>Sarcophaga</taxon>
        <taxon>Boettcherisca</taxon>
    </lineage>
</organism>
<keyword id="KW-0027">Amidation</keyword>
<keyword id="KW-0044">Antibiotic</keyword>
<keyword id="KW-0929">Antimicrobial</keyword>
<keyword id="KW-0391">Immunity</keyword>
<keyword id="KW-0399">Innate immunity</keyword>
<keyword id="KW-0873">Pyrrolidone carboxylic acid</keyword>
<keyword id="KW-0677">Repeat</keyword>
<keyword id="KW-0964">Secreted</keyword>
<keyword id="KW-0732">Signal</keyword>
<accession>P24491</accession>
<comment type="function">
    <text>Sarcotoxin II is an antibacterial protein which plays a role in the inflammatory response of this insect. The main effect of sarcotoxin II on E.coli may be the inhibition of cell wall synthesis, including septum formation.</text>
</comment>
<comment type="subcellular location">
    <subcellularLocation>
        <location>Secreted</location>
    </subcellularLocation>
</comment>
<comment type="tissue specificity">
    <text>Synthesized by the fat body and is eventually secreted into the hemolymph.</text>
</comment>
<comment type="induction">
    <text>In response to injury of the body wall of the larvae.</text>
</comment>
<comment type="miscellaneous">
    <text>Sarcotoxin II consists of at least four structurally related proteins named sarcotoxin IIa, II-1, II-2, and II-3.</text>
</comment>
<comment type="similarity">
    <text evidence="3">Belongs to the attacin/sarcotoxin-2 family.</text>
</comment>
<evidence type="ECO:0000250" key="1"/>
<evidence type="ECO:0000255" key="2"/>
<evidence type="ECO:0000305" key="3"/>